<protein>
    <recommendedName>
        <fullName>Uncharacterized protein YhdN</fullName>
    </recommendedName>
</protein>
<reference key="1">
    <citation type="journal article" date="1994" name="Gene">
        <title>A merR homologue at 74 minutes on the Escherichia coli genome.</title>
        <authorList>
            <person name="Christie G.E."/>
            <person name="White T.J."/>
            <person name="Goodwin T.S."/>
        </authorList>
    </citation>
    <scope>NUCLEOTIDE SEQUENCE [GENOMIC DNA]</scope>
</reference>
<reference key="2">
    <citation type="journal article" date="1997" name="Science">
        <title>The complete genome sequence of Escherichia coli K-12.</title>
        <authorList>
            <person name="Blattner F.R."/>
            <person name="Plunkett G. III"/>
            <person name="Bloch C.A."/>
            <person name="Perna N.T."/>
            <person name="Burland V."/>
            <person name="Riley M."/>
            <person name="Collado-Vides J."/>
            <person name="Glasner J.D."/>
            <person name="Rode C.K."/>
            <person name="Mayhew G.F."/>
            <person name="Gregor J."/>
            <person name="Davis N.W."/>
            <person name="Kirkpatrick H.A."/>
            <person name="Goeden M.A."/>
            <person name="Rose D.J."/>
            <person name="Mau B."/>
            <person name="Shao Y."/>
        </authorList>
    </citation>
    <scope>NUCLEOTIDE SEQUENCE [LARGE SCALE GENOMIC DNA]</scope>
    <source>
        <strain>K12 / MG1655 / ATCC 47076</strain>
    </source>
</reference>
<reference key="3">
    <citation type="journal article" date="2006" name="Mol. Syst. Biol.">
        <title>Highly accurate genome sequences of Escherichia coli K-12 strains MG1655 and W3110.</title>
        <authorList>
            <person name="Hayashi K."/>
            <person name="Morooka N."/>
            <person name="Yamamoto Y."/>
            <person name="Fujita K."/>
            <person name="Isono K."/>
            <person name="Choi S."/>
            <person name="Ohtsubo E."/>
            <person name="Baba T."/>
            <person name="Wanner B.L."/>
            <person name="Mori H."/>
            <person name="Horiuchi T."/>
        </authorList>
    </citation>
    <scope>NUCLEOTIDE SEQUENCE [LARGE SCALE GENOMIC DNA]</scope>
    <source>
        <strain>K12 / W3110 / ATCC 27325 / DSM 5911</strain>
    </source>
</reference>
<gene>
    <name type="primary">yhdN</name>
    <name type="ordered locus">b3293</name>
    <name type="ordered locus">JW3255</name>
</gene>
<dbReference type="EMBL" id="L29458">
    <property type="protein sequence ID" value="AAA24774.1"/>
    <property type="molecule type" value="Genomic_DNA"/>
</dbReference>
<dbReference type="EMBL" id="U18997">
    <property type="protein sequence ID" value="AAA58090.1"/>
    <property type="molecule type" value="Genomic_DNA"/>
</dbReference>
<dbReference type="EMBL" id="U00096">
    <property type="protein sequence ID" value="AAC76318.1"/>
    <property type="molecule type" value="Genomic_DNA"/>
</dbReference>
<dbReference type="EMBL" id="AP009048">
    <property type="protein sequence ID" value="BAE77998.1"/>
    <property type="molecule type" value="Genomic_DNA"/>
</dbReference>
<dbReference type="PIR" id="I67893">
    <property type="entry name" value="I67893"/>
</dbReference>
<dbReference type="RefSeq" id="NP_417752.1">
    <property type="nucleotide sequence ID" value="NC_000913.3"/>
</dbReference>
<dbReference type="RefSeq" id="WP_000266486.1">
    <property type="nucleotide sequence ID" value="NZ_SSZK01000040.1"/>
</dbReference>
<dbReference type="SMR" id="P36677"/>
<dbReference type="BioGRID" id="4263409">
    <property type="interactions" value="31"/>
</dbReference>
<dbReference type="FunCoup" id="P36677">
    <property type="interactions" value="43"/>
</dbReference>
<dbReference type="IntAct" id="P36677">
    <property type="interactions" value="4"/>
</dbReference>
<dbReference type="STRING" id="511145.b3293"/>
<dbReference type="PaxDb" id="511145-b3293"/>
<dbReference type="EnsemblBacteria" id="AAC76318">
    <property type="protein sequence ID" value="AAC76318"/>
    <property type="gene ID" value="b3293"/>
</dbReference>
<dbReference type="GeneID" id="947785"/>
<dbReference type="KEGG" id="ecj:JW3255"/>
<dbReference type="KEGG" id="eco:b3293"/>
<dbReference type="KEGG" id="ecoc:C3026_17905"/>
<dbReference type="PATRIC" id="fig|511145.12.peg.3386"/>
<dbReference type="EchoBASE" id="EB1913"/>
<dbReference type="eggNOG" id="ENOG5032TNY">
    <property type="taxonomic scope" value="Bacteria"/>
</dbReference>
<dbReference type="HOGENOM" id="CLU_129296_0_0_6"/>
<dbReference type="InParanoid" id="P36677"/>
<dbReference type="OMA" id="AQTKGEF"/>
<dbReference type="OrthoDB" id="9798476at2"/>
<dbReference type="PhylomeDB" id="P36677"/>
<dbReference type="BioCyc" id="EcoCyc:EG11970-MONOMER"/>
<dbReference type="PRO" id="PR:P36677"/>
<dbReference type="Proteomes" id="UP000000625">
    <property type="component" value="Chromosome"/>
</dbReference>
<dbReference type="InterPro" id="IPR052573">
    <property type="entry name" value="DnaJ_C_subfamily_28"/>
</dbReference>
<dbReference type="InterPro" id="IPR018961">
    <property type="entry name" value="DnaJ_homolog_subfam-C_membr-28"/>
</dbReference>
<dbReference type="NCBIfam" id="NF007572">
    <property type="entry name" value="PRK10203.1"/>
    <property type="match status" value="1"/>
</dbReference>
<dbReference type="PANTHER" id="PTHR39158:SF1">
    <property type="entry name" value="DNAJ HOMOLOG SUBFAMILY C MEMBER 28"/>
    <property type="match status" value="1"/>
</dbReference>
<dbReference type="PANTHER" id="PTHR39158">
    <property type="entry name" value="OS08G0560600 PROTEIN"/>
    <property type="match status" value="1"/>
</dbReference>
<dbReference type="Pfam" id="PF09350">
    <property type="entry name" value="DJC28_CD"/>
    <property type="match status" value="1"/>
</dbReference>
<accession>P36677</accession>
<accession>Q2M6V8</accession>
<name>YHDN_ECOLI</name>
<feature type="chain" id="PRO_0000169496" description="Uncharacterized protein YhdN">
    <location>
        <begin position="1"/>
        <end position="122"/>
    </location>
</feature>
<sequence>MWLLDQWAERHIAEAQAKGEFDNLAGSGEPLILDDDSHVPPELRAGYRLLKNAGCLPPELEQRREAIQLLDILKGIRHDDPQYQEVSRRLSLLELKLRQAGLSTDFLRGDYADKLLDKINDN</sequence>
<proteinExistence type="predicted"/>
<organism>
    <name type="scientific">Escherichia coli (strain K12)</name>
    <dbReference type="NCBI Taxonomy" id="83333"/>
    <lineage>
        <taxon>Bacteria</taxon>
        <taxon>Pseudomonadati</taxon>
        <taxon>Pseudomonadota</taxon>
        <taxon>Gammaproteobacteria</taxon>
        <taxon>Enterobacterales</taxon>
        <taxon>Enterobacteriaceae</taxon>
        <taxon>Escherichia</taxon>
    </lineage>
</organism>
<keyword id="KW-1185">Reference proteome</keyword>